<dbReference type="EC" id="7.1.2.2" evidence="1"/>
<dbReference type="EMBL" id="AE014074">
    <property type="protein sequence ID" value="AAM79104.1"/>
    <property type="molecule type" value="Genomic_DNA"/>
</dbReference>
<dbReference type="RefSeq" id="WP_002985238.1">
    <property type="nucleotide sequence ID" value="NC_004070.1"/>
</dbReference>
<dbReference type="SMR" id="P0DA02"/>
<dbReference type="KEGG" id="spg:SpyM3_0497"/>
<dbReference type="HOGENOM" id="CLU_010091_2_1_9"/>
<dbReference type="Proteomes" id="UP000000564">
    <property type="component" value="Chromosome"/>
</dbReference>
<dbReference type="GO" id="GO:0005886">
    <property type="term" value="C:plasma membrane"/>
    <property type="evidence" value="ECO:0007669"/>
    <property type="project" value="UniProtKB-SubCell"/>
</dbReference>
<dbReference type="GO" id="GO:0045259">
    <property type="term" value="C:proton-transporting ATP synthase complex"/>
    <property type="evidence" value="ECO:0007669"/>
    <property type="project" value="UniProtKB-KW"/>
</dbReference>
<dbReference type="GO" id="GO:0043531">
    <property type="term" value="F:ADP binding"/>
    <property type="evidence" value="ECO:0007669"/>
    <property type="project" value="TreeGrafter"/>
</dbReference>
<dbReference type="GO" id="GO:0005524">
    <property type="term" value="F:ATP binding"/>
    <property type="evidence" value="ECO:0007669"/>
    <property type="project" value="UniProtKB-UniRule"/>
</dbReference>
<dbReference type="GO" id="GO:0046933">
    <property type="term" value="F:proton-transporting ATP synthase activity, rotational mechanism"/>
    <property type="evidence" value="ECO:0007669"/>
    <property type="project" value="UniProtKB-UniRule"/>
</dbReference>
<dbReference type="CDD" id="cd18113">
    <property type="entry name" value="ATP-synt_F1_alpha_C"/>
    <property type="match status" value="1"/>
</dbReference>
<dbReference type="CDD" id="cd18116">
    <property type="entry name" value="ATP-synt_F1_alpha_N"/>
    <property type="match status" value="1"/>
</dbReference>
<dbReference type="CDD" id="cd01132">
    <property type="entry name" value="F1-ATPase_alpha_CD"/>
    <property type="match status" value="1"/>
</dbReference>
<dbReference type="FunFam" id="1.20.150.20:FF:000001">
    <property type="entry name" value="ATP synthase subunit alpha"/>
    <property type="match status" value="1"/>
</dbReference>
<dbReference type="FunFam" id="2.40.30.20:FF:000001">
    <property type="entry name" value="ATP synthase subunit alpha"/>
    <property type="match status" value="1"/>
</dbReference>
<dbReference type="FunFam" id="3.40.50.300:FF:000002">
    <property type="entry name" value="ATP synthase subunit alpha"/>
    <property type="match status" value="1"/>
</dbReference>
<dbReference type="Gene3D" id="2.40.30.20">
    <property type="match status" value="1"/>
</dbReference>
<dbReference type="Gene3D" id="1.20.150.20">
    <property type="entry name" value="ATP synthase alpha/beta chain, C-terminal domain"/>
    <property type="match status" value="1"/>
</dbReference>
<dbReference type="Gene3D" id="3.40.50.300">
    <property type="entry name" value="P-loop containing nucleotide triphosphate hydrolases"/>
    <property type="match status" value="1"/>
</dbReference>
<dbReference type="HAMAP" id="MF_01346">
    <property type="entry name" value="ATP_synth_alpha_bact"/>
    <property type="match status" value="1"/>
</dbReference>
<dbReference type="InterPro" id="IPR023366">
    <property type="entry name" value="ATP_synth_asu-like_sf"/>
</dbReference>
<dbReference type="InterPro" id="IPR000793">
    <property type="entry name" value="ATP_synth_asu_C"/>
</dbReference>
<dbReference type="InterPro" id="IPR038376">
    <property type="entry name" value="ATP_synth_asu_C_sf"/>
</dbReference>
<dbReference type="InterPro" id="IPR033732">
    <property type="entry name" value="ATP_synth_F1_a_nt-bd_dom"/>
</dbReference>
<dbReference type="InterPro" id="IPR005294">
    <property type="entry name" value="ATP_synth_F1_asu"/>
</dbReference>
<dbReference type="InterPro" id="IPR004100">
    <property type="entry name" value="ATPase_F1/V1/A1_a/bsu_N"/>
</dbReference>
<dbReference type="InterPro" id="IPR036121">
    <property type="entry name" value="ATPase_F1/V1/A1_a/bsu_N_sf"/>
</dbReference>
<dbReference type="InterPro" id="IPR000194">
    <property type="entry name" value="ATPase_F1/V1/A1_a/bsu_nucl-bd"/>
</dbReference>
<dbReference type="InterPro" id="IPR027417">
    <property type="entry name" value="P-loop_NTPase"/>
</dbReference>
<dbReference type="NCBIfam" id="TIGR00962">
    <property type="entry name" value="atpA"/>
    <property type="match status" value="1"/>
</dbReference>
<dbReference type="NCBIfam" id="NF009884">
    <property type="entry name" value="PRK13343.1"/>
    <property type="match status" value="1"/>
</dbReference>
<dbReference type="PANTHER" id="PTHR48082">
    <property type="entry name" value="ATP SYNTHASE SUBUNIT ALPHA, MITOCHONDRIAL"/>
    <property type="match status" value="1"/>
</dbReference>
<dbReference type="PANTHER" id="PTHR48082:SF2">
    <property type="entry name" value="ATP SYNTHASE SUBUNIT ALPHA, MITOCHONDRIAL"/>
    <property type="match status" value="1"/>
</dbReference>
<dbReference type="Pfam" id="PF00006">
    <property type="entry name" value="ATP-synt_ab"/>
    <property type="match status" value="1"/>
</dbReference>
<dbReference type="Pfam" id="PF00306">
    <property type="entry name" value="ATP-synt_ab_C"/>
    <property type="match status" value="1"/>
</dbReference>
<dbReference type="Pfam" id="PF02874">
    <property type="entry name" value="ATP-synt_ab_N"/>
    <property type="match status" value="1"/>
</dbReference>
<dbReference type="PIRSF" id="PIRSF039088">
    <property type="entry name" value="F_ATPase_subunit_alpha"/>
    <property type="match status" value="1"/>
</dbReference>
<dbReference type="SUPFAM" id="SSF47917">
    <property type="entry name" value="C-terminal domain of alpha and beta subunits of F1 ATP synthase"/>
    <property type="match status" value="1"/>
</dbReference>
<dbReference type="SUPFAM" id="SSF50615">
    <property type="entry name" value="N-terminal domain of alpha and beta subunits of F1 ATP synthase"/>
    <property type="match status" value="1"/>
</dbReference>
<dbReference type="SUPFAM" id="SSF52540">
    <property type="entry name" value="P-loop containing nucleoside triphosphate hydrolases"/>
    <property type="match status" value="1"/>
</dbReference>
<gene>
    <name evidence="1" type="primary">atpA</name>
    <name type="ordered locus">SpyM3_0497</name>
</gene>
<protein>
    <recommendedName>
        <fullName evidence="1">ATP synthase subunit alpha</fullName>
        <ecNumber evidence="1">7.1.2.2</ecNumber>
    </recommendedName>
    <alternativeName>
        <fullName evidence="1">ATP synthase F1 sector subunit alpha</fullName>
    </alternativeName>
    <alternativeName>
        <fullName evidence="1">F-ATPase subunit alpha</fullName>
    </alternativeName>
</protein>
<proteinExistence type="inferred from homology"/>
<sequence length="502" mass="54685">MAINAQEISALIKKQIENFQPNFDVTETGIVTYIGDGIARARGLDNAMSGELLEFENGAYGMAQNLESNDVGIIILGDFSAIREGDVVKRTGKIMEVPVGEALIGRVVNPLGQPVDGLGDIETTGFRPVETPAPGVMQRKSVSEPLQTGLKAIDALVPIGRGQRELIIGDRQTGKTSVAIDAILNQKGQDMICIYVAIGQKESTVRTQVETLRRYGALDYTIVVTASASQPSPLLFIAPYAGVAMAEEFMYQGKHVLIVYDDLSKQAVAYRELSLLLRRPPGREAYPGDVFYLHSRLLERSAKVSDDLGGGSITALPFIETQAGDISAYIATNVISITDGQIFLQENLFNSGIRPAIDAGSSVSRVGGSAQIKAMKKVAGTLRLDLASYRELEAFTQFGSDLDAATQAKLNRGRRTVEILKQPLHKPLPVEKQVVILYALTHGFLDDVPVDDILAFEEALYDYFDVHYNDLFETIRTTKDLPEEAALDAAIKAFKEHSNFKS</sequence>
<evidence type="ECO:0000255" key="1">
    <source>
        <dbReference type="HAMAP-Rule" id="MF_01346"/>
    </source>
</evidence>
<organism>
    <name type="scientific">Streptococcus pyogenes serotype M3 (strain ATCC BAA-595 / MGAS315)</name>
    <dbReference type="NCBI Taxonomy" id="198466"/>
    <lineage>
        <taxon>Bacteria</taxon>
        <taxon>Bacillati</taxon>
        <taxon>Bacillota</taxon>
        <taxon>Bacilli</taxon>
        <taxon>Lactobacillales</taxon>
        <taxon>Streptococcaceae</taxon>
        <taxon>Streptococcus</taxon>
    </lineage>
</organism>
<keyword id="KW-0066">ATP synthesis</keyword>
<keyword id="KW-0067">ATP-binding</keyword>
<keyword id="KW-1003">Cell membrane</keyword>
<keyword id="KW-0139">CF(1)</keyword>
<keyword id="KW-0375">Hydrogen ion transport</keyword>
<keyword id="KW-0406">Ion transport</keyword>
<keyword id="KW-0472">Membrane</keyword>
<keyword id="KW-0547">Nucleotide-binding</keyword>
<keyword id="KW-1278">Translocase</keyword>
<keyword id="KW-0813">Transport</keyword>
<accession>P0DA02</accession>
<accession>Q79WQ3</accession>
<accession>Q7CFA2</accession>
<feature type="chain" id="PRO_0000238369" description="ATP synthase subunit alpha">
    <location>
        <begin position="1"/>
        <end position="502"/>
    </location>
</feature>
<feature type="binding site" evidence="1">
    <location>
        <begin position="169"/>
        <end position="176"/>
    </location>
    <ligand>
        <name>ATP</name>
        <dbReference type="ChEBI" id="CHEBI:30616"/>
    </ligand>
</feature>
<feature type="site" description="Required for activity" evidence="1">
    <location>
        <position position="362"/>
    </location>
</feature>
<comment type="function">
    <text evidence="1">Produces ATP from ADP in the presence of a proton gradient across the membrane. The alpha chain is a regulatory subunit.</text>
</comment>
<comment type="catalytic activity">
    <reaction evidence="1">
        <text>ATP + H2O + 4 H(+)(in) = ADP + phosphate + 5 H(+)(out)</text>
        <dbReference type="Rhea" id="RHEA:57720"/>
        <dbReference type="ChEBI" id="CHEBI:15377"/>
        <dbReference type="ChEBI" id="CHEBI:15378"/>
        <dbReference type="ChEBI" id="CHEBI:30616"/>
        <dbReference type="ChEBI" id="CHEBI:43474"/>
        <dbReference type="ChEBI" id="CHEBI:456216"/>
        <dbReference type="EC" id="7.1.2.2"/>
    </reaction>
</comment>
<comment type="subunit">
    <text evidence="1">F-type ATPases have 2 components, CF(1) - the catalytic core - and CF(0) - the membrane proton channel. CF(1) has five subunits: alpha(3), beta(3), gamma(1), delta(1), epsilon(1). CF(0) has three main subunits: a(1), b(2) and c(9-12). The alpha and beta chains form an alternating ring which encloses part of the gamma chain. CF(1) is attached to CF(0) by a central stalk formed by the gamma and epsilon chains, while a peripheral stalk is formed by the delta and b chains.</text>
</comment>
<comment type="subcellular location">
    <subcellularLocation>
        <location evidence="1">Cell membrane</location>
        <topology evidence="1">Peripheral membrane protein</topology>
    </subcellularLocation>
</comment>
<comment type="similarity">
    <text evidence="1">Belongs to the ATPase alpha/beta chains family.</text>
</comment>
<name>ATPA_STRP3</name>
<reference key="1">
    <citation type="journal article" date="2002" name="Proc. Natl. Acad. Sci. U.S.A.">
        <title>Genome sequence of a serotype M3 strain of group A Streptococcus: phage-encoded toxins, the high-virulence phenotype, and clone emergence.</title>
        <authorList>
            <person name="Beres S.B."/>
            <person name="Sylva G.L."/>
            <person name="Barbian K.D."/>
            <person name="Lei B."/>
            <person name="Hoff J.S."/>
            <person name="Mammarella N.D."/>
            <person name="Liu M.-Y."/>
            <person name="Smoot J.C."/>
            <person name="Porcella S.F."/>
            <person name="Parkins L.D."/>
            <person name="Campbell D.S."/>
            <person name="Smith T.M."/>
            <person name="McCormick J.K."/>
            <person name="Leung D.Y.M."/>
            <person name="Schlievert P.M."/>
            <person name="Musser J.M."/>
        </authorList>
    </citation>
    <scope>NUCLEOTIDE SEQUENCE [LARGE SCALE GENOMIC DNA]</scope>
    <source>
        <strain>ATCC BAA-595 / MGAS315</strain>
    </source>
</reference>